<name>RADA_SYNY3</name>
<feature type="chain" id="PRO_0000187942" description="DNA repair protein RadA">
    <location>
        <begin position="1"/>
        <end position="505"/>
    </location>
</feature>
<feature type="zinc finger region" description="C4-type" evidence="1">
    <location>
        <begin position="10"/>
        <end position="27"/>
    </location>
</feature>
<feature type="region of interest" description="Lon-protease-like" evidence="1">
    <location>
        <begin position="380"/>
        <end position="505"/>
    </location>
</feature>
<feature type="region of interest" description="Disordered" evidence="2">
    <location>
        <begin position="485"/>
        <end position="505"/>
    </location>
</feature>
<feature type="short sequence motif" description="RadA KNRFG motif" evidence="1">
    <location>
        <begin position="281"/>
        <end position="285"/>
    </location>
</feature>
<feature type="compositionally biased region" description="Basic and acidic residues" evidence="2">
    <location>
        <begin position="495"/>
        <end position="505"/>
    </location>
</feature>
<feature type="binding site" evidence="1">
    <location>
        <begin position="107"/>
        <end position="114"/>
    </location>
    <ligand>
        <name>ATP</name>
        <dbReference type="ChEBI" id="CHEBI:30616"/>
    </ligand>
</feature>
<evidence type="ECO:0000255" key="1">
    <source>
        <dbReference type="HAMAP-Rule" id="MF_01498"/>
    </source>
</evidence>
<evidence type="ECO:0000256" key="2">
    <source>
        <dbReference type="SAM" id="MobiDB-lite"/>
    </source>
</evidence>
<gene>
    <name evidence="1" type="primary">radA</name>
    <name type="synonym">sms</name>
    <name type="ordered locus">slr0448</name>
</gene>
<keyword id="KW-0067">ATP-binding</keyword>
<keyword id="KW-0227">DNA damage</keyword>
<keyword id="KW-0234">DNA repair</keyword>
<keyword id="KW-0238">DNA-binding</keyword>
<keyword id="KW-0378">Hydrolase</keyword>
<keyword id="KW-0479">Metal-binding</keyword>
<keyword id="KW-0547">Nucleotide-binding</keyword>
<keyword id="KW-1185">Reference proteome</keyword>
<keyword id="KW-0346">Stress response</keyword>
<keyword id="KW-0862">Zinc</keyword>
<keyword id="KW-0863">Zinc-finger</keyword>
<sequence length="505" mass="54191">MAKARTKFVCSACGADHAQWFGRCPKCHEYGSLQEEIVNAVSSGTNHRSLGAQKSRSSKVKTGQPQAALTFSQIRQENQGRFLSGYGELDRVLGGGIVPGALILIGGDPGIGKSTLLLQVAFQLATRLPRILYVSAEESGQQIKLRATRLGITQTVEPSQAQDGINNLAHDGNLFVLPETNLDDILRELEALQPQVAIIDSIQNLYFPALSSAPGSVSQVRECTGLLMQLAKRDHISLFIVGHVTKEGAIAGPKVLEHLVDTVLYFQGDRFASHRLLRSVKNRFGATQEIGIFEMVQSGLQEVLNPSQLFLGSREEFMSGTAITVACEGTRPLVVELQALVSPTSYASPRRSTTGVDYNRLLQVLAVLEKRLGVPLSKLDAYLSVAGGLEVEEPAVDLAMAIALVASFRDRVVDPTMIILGEIGLGGQIRPVSQLEIRLKEAAKLGFKKAIVPKGQTGIESAGIKLIPVGKVFAAIAVALPANENTTDQGNGSEAKIEEDLGKKD</sequence>
<proteinExistence type="inferred from homology"/>
<protein>
    <recommendedName>
        <fullName evidence="1">DNA repair protein RadA</fullName>
        <ecNumber evidence="1">3.6.4.-</ecNumber>
    </recommendedName>
    <alternativeName>
        <fullName evidence="1">Branch migration protein RadA</fullName>
    </alternativeName>
</protein>
<reference key="1">
    <citation type="journal article" date="1996" name="DNA Res.">
        <title>Sequence analysis of the genome of the unicellular cyanobacterium Synechocystis sp. strain PCC6803. II. Sequence determination of the entire genome and assignment of potential protein-coding regions.</title>
        <authorList>
            <person name="Kaneko T."/>
            <person name="Sato S."/>
            <person name="Kotani H."/>
            <person name="Tanaka A."/>
            <person name="Asamizu E."/>
            <person name="Nakamura Y."/>
            <person name="Miyajima N."/>
            <person name="Hirosawa M."/>
            <person name="Sugiura M."/>
            <person name="Sasamoto S."/>
            <person name="Kimura T."/>
            <person name="Hosouchi T."/>
            <person name="Matsuno A."/>
            <person name="Muraki A."/>
            <person name="Nakazaki N."/>
            <person name="Naruo K."/>
            <person name="Okumura S."/>
            <person name="Shimpo S."/>
            <person name="Takeuchi C."/>
            <person name="Wada T."/>
            <person name="Watanabe A."/>
            <person name="Yamada M."/>
            <person name="Yasuda M."/>
            <person name="Tabata S."/>
        </authorList>
    </citation>
    <scope>NUCLEOTIDE SEQUENCE [LARGE SCALE GENOMIC DNA]</scope>
    <source>
        <strain>ATCC 27184 / PCC 6803 / Kazusa</strain>
    </source>
</reference>
<accession>P74391</accession>
<organism>
    <name type="scientific">Synechocystis sp. (strain ATCC 27184 / PCC 6803 / Kazusa)</name>
    <dbReference type="NCBI Taxonomy" id="1111708"/>
    <lineage>
        <taxon>Bacteria</taxon>
        <taxon>Bacillati</taxon>
        <taxon>Cyanobacteriota</taxon>
        <taxon>Cyanophyceae</taxon>
        <taxon>Synechococcales</taxon>
        <taxon>Merismopediaceae</taxon>
        <taxon>Synechocystis</taxon>
    </lineage>
</organism>
<dbReference type="EC" id="3.6.4.-" evidence="1"/>
<dbReference type="EMBL" id="BA000022">
    <property type="protein sequence ID" value="BAA18488.1"/>
    <property type="molecule type" value="Genomic_DNA"/>
</dbReference>
<dbReference type="PIR" id="S76229">
    <property type="entry name" value="S76229"/>
</dbReference>
<dbReference type="SMR" id="P74391"/>
<dbReference type="FunCoup" id="P74391">
    <property type="interactions" value="341"/>
</dbReference>
<dbReference type="STRING" id="1148.gene:10499369"/>
<dbReference type="MEROPS" id="S16.A04"/>
<dbReference type="PaxDb" id="1148-1653575"/>
<dbReference type="EnsemblBacteria" id="BAA18488">
    <property type="protein sequence ID" value="BAA18488"/>
    <property type="gene ID" value="BAA18488"/>
</dbReference>
<dbReference type="KEGG" id="syn:slr0448"/>
<dbReference type="eggNOG" id="COG1066">
    <property type="taxonomic scope" value="Bacteria"/>
</dbReference>
<dbReference type="InParanoid" id="P74391"/>
<dbReference type="PhylomeDB" id="P74391"/>
<dbReference type="Proteomes" id="UP000001425">
    <property type="component" value="Chromosome"/>
</dbReference>
<dbReference type="GO" id="GO:0005524">
    <property type="term" value="F:ATP binding"/>
    <property type="evidence" value="ECO:0007669"/>
    <property type="project" value="UniProtKB-UniRule"/>
</dbReference>
<dbReference type="GO" id="GO:0016887">
    <property type="term" value="F:ATP hydrolysis activity"/>
    <property type="evidence" value="ECO:0007669"/>
    <property type="project" value="InterPro"/>
</dbReference>
<dbReference type="GO" id="GO:0140664">
    <property type="term" value="F:ATP-dependent DNA damage sensor activity"/>
    <property type="evidence" value="ECO:0007669"/>
    <property type="project" value="InterPro"/>
</dbReference>
<dbReference type="GO" id="GO:0003684">
    <property type="term" value="F:damaged DNA binding"/>
    <property type="evidence" value="ECO:0007669"/>
    <property type="project" value="InterPro"/>
</dbReference>
<dbReference type="GO" id="GO:0008270">
    <property type="term" value="F:zinc ion binding"/>
    <property type="evidence" value="ECO:0007669"/>
    <property type="project" value="UniProtKB-KW"/>
</dbReference>
<dbReference type="GO" id="GO:0000725">
    <property type="term" value="P:recombinational repair"/>
    <property type="evidence" value="ECO:0000318"/>
    <property type="project" value="GO_Central"/>
</dbReference>
<dbReference type="CDD" id="cd01121">
    <property type="entry name" value="RadA_SMS_N"/>
    <property type="match status" value="1"/>
</dbReference>
<dbReference type="FunFam" id="3.30.230.10:FF:000049">
    <property type="entry name" value="DNA repair protein RadA"/>
    <property type="match status" value="1"/>
</dbReference>
<dbReference type="FunFam" id="3.40.50.300:FF:000050">
    <property type="entry name" value="DNA repair protein RadA"/>
    <property type="match status" value="1"/>
</dbReference>
<dbReference type="Gene3D" id="3.30.230.10">
    <property type="match status" value="1"/>
</dbReference>
<dbReference type="Gene3D" id="3.40.50.300">
    <property type="entry name" value="P-loop containing nucleotide triphosphate hydrolases"/>
    <property type="match status" value="1"/>
</dbReference>
<dbReference type="HAMAP" id="MF_01498">
    <property type="entry name" value="RadA_bact"/>
    <property type="match status" value="1"/>
</dbReference>
<dbReference type="InterPro" id="IPR003593">
    <property type="entry name" value="AAA+_ATPase"/>
</dbReference>
<dbReference type="InterPro" id="IPR004504">
    <property type="entry name" value="DNA_repair_RadA"/>
</dbReference>
<dbReference type="InterPro" id="IPR027417">
    <property type="entry name" value="P-loop_NTPase"/>
</dbReference>
<dbReference type="InterPro" id="IPR020588">
    <property type="entry name" value="RecA_ATP-bd"/>
</dbReference>
<dbReference type="InterPro" id="IPR020568">
    <property type="entry name" value="Ribosomal_Su5_D2-typ_SF"/>
</dbReference>
<dbReference type="InterPro" id="IPR014721">
    <property type="entry name" value="Ribsml_uS5_D2-typ_fold_subgr"/>
</dbReference>
<dbReference type="InterPro" id="IPR041166">
    <property type="entry name" value="Rubredoxin_2"/>
</dbReference>
<dbReference type="NCBIfam" id="TIGR00416">
    <property type="entry name" value="sms"/>
    <property type="match status" value="1"/>
</dbReference>
<dbReference type="PANTHER" id="PTHR32472">
    <property type="entry name" value="DNA REPAIR PROTEIN RADA"/>
    <property type="match status" value="1"/>
</dbReference>
<dbReference type="PANTHER" id="PTHR32472:SF10">
    <property type="entry name" value="DNA REPAIR PROTEIN RADA-LIKE PROTEIN"/>
    <property type="match status" value="1"/>
</dbReference>
<dbReference type="Pfam" id="PF13481">
    <property type="entry name" value="AAA_25"/>
    <property type="match status" value="1"/>
</dbReference>
<dbReference type="Pfam" id="PF13541">
    <property type="entry name" value="ChlI"/>
    <property type="match status" value="1"/>
</dbReference>
<dbReference type="Pfam" id="PF18073">
    <property type="entry name" value="Zn_ribbon_LapB"/>
    <property type="match status" value="1"/>
</dbReference>
<dbReference type="PRINTS" id="PR01874">
    <property type="entry name" value="DNAREPAIRADA"/>
</dbReference>
<dbReference type="SMART" id="SM00382">
    <property type="entry name" value="AAA"/>
    <property type="match status" value="1"/>
</dbReference>
<dbReference type="SUPFAM" id="SSF52540">
    <property type="entry name" value="P-loop containing nucleoside triphosphate hydrolases"/>
    <property type="match status" value="1"/>
</dbReference>
<dbReference type="SUPFAM" id="SSF54211">
    <property type="entry name" value="Ribosomal protein S5 domain 2-like"/>
    <property type="match status" value="1"/>
</dbReference>
<dbReference type="PROSITE" id="PS50162">
    <property type="entry name" value="RECA_2"/>
    <property type="match status" value="1"/>
</dbReference>
<comment type="function">
    <text evidence="1">DNA-dependent ATPase involved in processing of recombination intermediates, plays a role in repairing DNA breaks. Stimulates the branch migration of RecA-mediated strand transfer reactions, allowing the 3' invading strand to extend heteroduplex DNA faster. Binds ssDNA in the presence of ADP but not other nucleotides, has ATPase activity that is stimulated by ssDNA and various branched DNA structures, but inhibited by SSB. Does not have RecA's homology-searching function.</text>
</comment>
<comment type="domain">
    <text evidence="1">Has a putative N-terminal zinc-finger, a middle region with homology to RecA with ATPase motifs including the RadA KNRFG motif, while the C-terminus is homologous to Lon protease.</text>
</comment>
<comment type="similarity">
    <text evidence="1">Belongs to the RecA family. RadA subfamily.</text>
</comment>